<organism>
    <name type="scientific">Rickettsia prowazekii (strain Madrid E)</name>
    <dbReference type="NCBI Taxonomy" id="272947"/>
    <lineage>
        <taxon>Bacteria</taxon>
        <taxon>Pseudomonadati</taxon>
        <taxon>Pseudomonadota</taxon>
        <taxon>Alphaproteobacteria</taxon>
        <taxon>Rickettsiales</taxon>
        <taxon>Rickettsiaceae</taxon>
        <taxon>Rickettsieae</taxon>
        <taxon>Rickettsia</taxon>
        <taxon>typhus group</taxon>
    </lineage>
</organism>
<name>RL31_RICPR</name>
<dbReference type="EMBL" id="AJ235270">
    <property type="protein sequence ID" value="CAA14570.1"/>
    <property type="molecule type" value="Genomic_DNA"/>
</dbReference>
<dbReference type="PIR" id="C71719">
    <property type="entry name" value="C71719"/>
</dbReference>
<dbReference type="RefSeq" id="NP_220493.1">
    <property type="nucleotide sequence ID" value="NC_000963.1"/>
</dbReference>
<dbReference type="RefSeq" id="WP_004596473.1">
    <property type="nucleotide sequence ID" value="NC_000963.1"/>
</dbReference>
<dbReference type="STRING" id="272947.gene:17555183"/>
<dbReference type="EnsemblBacteria" id="CAA14570">
    <property type="protein sequence ID" value="CAA14570"/>
    <property type="gene ID" value="CAA14570"/>
</dbReference>
<dbReference type="GeneID" id="57569227"/>
<dbReference type="KEGG" id="rpr:RP100"/>
<dbReference type="PATRIC" id="fig|272947.5.peg.100"/>
<dbReference type="eggNOG" id="COG0254">
    <property type="taxonomic scope" value="Bacteria"/>
</dbReference>
<dbReference type="HOGENOM" id="CLU_114306_3_1_5"/>
<dbReference type="OrthoDB" id="9803251at2"/>
<dbReference type="Proteomes" id="UP000002480">
    <property type="component" value="Chromosome"/>
</dbReference>
<dbReference type="GO" id="GO:1990904">
    <property type="term" value="C:ribonucleoprotein complex"/>
    <property type="evidence" value="ECO:0007669"/>
    <property type="project" value="UniProtKB-KW"/>
</dbReference>
<dbReference type="GO" id="GO:0005840">
    <property type="term" value="C:ribosome"/>
    <property type="evidence" value="ECO:0007669"/>
    <property type="project" value="UniProtKB-KW"/>
</dbReference>
<dbReference type="GO" id="GO:0019843">
    <property type="term" value="F:rRNA binding"/>
    <property type="evidence" value="ECO:0007669"/>
    <property type="project" value="UniProtKB-KW"/>
</dbReference>
<dbReference type="GO" id="GO:0003735">
    <property type="term" value="F:structural constituent of ribosome"/>
    <property type="evidence" value="ECO:0007669"/>
    <property type="project" value="InterPro"/>
</dbReference>
<dbReference type="GO" id="GO:0006412">
    <property type="term" value="P:translation"/>
    <property type="evidence" value="ECO:0007669"/>
    <property type="project" value="UniProtKB-UniRule"/>
</dbReference>
<dbReference type="Gene3D" id="4.10.830.30">
    <property type="entry name" value="Ribosomal protein L31"/>
    <property type="match status" value="1"/>
</dbReference>
<dbReference type="HAMAP" id="MF_00501">
    <property type="entry name" value="Ribosomal_bL31_1"/>
    <property type="match status" value="1"/>
</dbReference>
<dbReference type="InterPro" id="IPR034704">
    <property type="entry name" value="Ribosomal_bL28/bL31-like_sf"/>
</dbReference>
<dbReference type="InterPro" id="IPR002150">
    <property type="entry name" value="Ribosomal_bL31"/>
</dbReference>
<dbReference type="InterPro" id="IPR027491">
    <property type="entry name" value="Ribosomal_bL31_A"/>
</dbReference>
<dbReference type="InterPro" id="IPR042105">
    <property type="entry name" value="Ribosomal_bL31_sf"/>
</dbReference>
<dbReference type="NCBIfam" id="TIGR00105">
    <property type="entry name" value="L31"/>
    <property type="match status" value="1"/>
</dbReference>
<dbReference type="Pfam" id="PF01197">
    <property type="entry name" value="Ribosomal_L31"/>
    <property type="match status" value="1"/>
</dbReference>
<dbReference type="SUPFAM" id="SSF143800">
    <property type="entry name" value="L28p-like"/>
    <property type="match status" value="1"/>
</dbReference>
<dbReference type="PROSITE" id="PS01143">
    <property type="entry name" value="RIBOSOMAL_L31"/>
    <property type="match status" value="1"/>
</dbReference>
<protein>
    <recommendedName>
        <fullName evidence="1">Large ribosomal subunit protein bL31</fullName>
    </recommendedName>
    <alternativeName>
        <fullName evidence="2">50S ribosomal protein L31</fullName>
    </alternativeName>
</protein>
<gene>
    <name evidence="1" type="primary">rpmE</name>
    <name type="ordered locus">RP100</name>
</gene>
<proteinExistence type="inferred from homology"/>
<reference key="1">
    <citation type="journal article" date="1998" name="Nature">
        <title>The genome sequence of Rickettsia prowazekii and the origin of mitochondria.</title>
        <authorList>
            <person name="Andersson S.G.E."/>
            <person name="Zomorodipour A."/>
            <person name="Andersson J.O."/>
            <person name="Sicheritz-Ponten T."/>
            <person name="Alsmark U.C.M."/>
            <person name="Podowski R.M."/>
            <person name="Naeslund A.K."/>
            <person name="Eriksson A.-S."/>
            <person name="Winkler H.H."/>
            <person name="Kurland C.G."/>
        </authorList>
    </citation>
    <scope>NUCLEOTIDE SEQUENCE [LARGE SCALE GENOMIC DNA]</scope>
    <source>
        <strain>Madrid E</strain>
    </source>
</reference>
<feature type="chain" id="PRO_0000173155" description="Large ribosomal subunit protein bL31">
    <location>
        <begin position="1"/>
        <end position="78"/>
    </location>
</feature>
<accession>Q9ZE47</accession>
<comment type="function">
    <text evidence="1">Binds the 23S rRNA.</text>
</comment>
<comment type="subunit">
    <text evidence="1">Part of the 50S ribosomal subunit.</text>
</comment>
<comment type="similarity">
    <text evidence="1">Belongs to the bacterial ribosomal protein bL31 family. Type A subfamily.</text>
</comment>
<sequence>MKNGIHPEYKKLLIKVGSNIFETMSTHPIGEILMDVDFRKHPAWNKDSGNVVNQSNKSVSDFNKRFAGLSFDSKKEAS</sequence>
<evidence type="ECO:0000255" key="1">
    <source>
        <dbReference type="HAMAP-Rule" id="MF_00501"/>
    </source>
</evidence>
<evidence type="ECO:0000305" key="2"/>
<keyword id="KW-1185">Reference proteome</keyword>
<keyword id="KW-0687">Ribonucleoprotein</keyword>
<keyword id="KW-0689">Ribosomal protein</keyword>
<keyword id="KW-0694">RNA-binding</keyword>
<keyword id="KW-0699">rRNA-binding</keyword>